<accession>Q0T689</accession>
<protein>
    <recommendedName>
        <fullName evidence="1">Dihydroorotate dehydrogenase (quinone)</fullName>
        <ecNumber evidence="1">1.3.5.2</ecNumber>
    </recommendedName>
    <alternativeName>
        <fullName evidence="1">DHOdehase</fullName>
        <shortName evidence="1">DHOD</shortName>
        <shortName evidence="1">DHODase</shortName>
    </alternativeName>
    <alternativeName>
        <fullName evidence="1">Dihydroorotate oxidase</fullName>
    </alternativeName>
</protein>
<name>PYRD_SHIF8</name>
<sequence length="336" mass="36760">MYYPFVRKALFQLDPERAHEFTFQQLRRITGTPFEALVRQKVPAKPVNCMGLTFKNPLGLAAGLDKDGECIDALGAMGFGSIEIGTVTPRPQPGNDKPRLFRLVDAEGLINRMGFNNLGVDNLVENVKKAHYDGVLGINIGKNKDTPVEQGKDDYLICMEKIYAYAGYIAINISSPNTPGLRTLQYGEALDDLLTAIKNKQNDLQAMHHKYVPIAVKIAPDLSEDELIQVADSLVRHNIDGVIATNTTLDRSLVQGMKNCDQTGGLSGRPLQLKSTEIIRRLSLELNGRLPIIGVGGIDSVIAAREKIAAGASLVQIYSGFIFKGPPLIKEIVTHI</sequence>
<comment type="function">
    <text evidence="1">Catalyzes the conversion of dihydroorotate to orotate with quinone as electron acceptor.</text>
</comment>
<comment type="catalytic activity">
    <reaction evidence="1">
        <text>(S)-dihydroorotate + a quinone = orotate + a quinol</text>
        <dbReference type="Rhea" id="RHEA:30187"/>
        <dbReference type="ChEBI" id="CHEBI:24646"/>
        <dbReference type="ChEBI" id="CHEBI:30839"/>
        <dbReference type="ChEBI" id="CHEBI:30864"/>
        <dbReference type="ChEBI" id="CHEBI:132124"/>
        <dbReference type="EC" id="1.3.5.2"/>
    </reaction>
</comment>
<comment type="cofactor">
    <cofactor evidence="1">
        <name>FMN</name>
        <dbReference type="ChEBI" id="CHEBI:58210"/>
    </cofactor>
    <text evidence="1">Binds 1 FMN per subunit.</text>
</comment>
<comment type="pathway">
    <text evidence="1">Pyrimidine metabolism; UMP biosynthesis via de novo pathway; orotate from (S)-dihydroorotate (quinone route): step 1/1.</text>
</comment>
<comment type="subunit">
    <text evidence="1">Monomer.</text>
</comment>
<comment type="subcellular location">
    <subcellularLocation>
        <location evidence="1">Cell membrane</location>
        <topology evidence="1">Peripheral membrane protein</topology>
    </subcellularLocation>
</comment>
<comment type="similarity">
    <text evidence="1">Belongs to the dihydroorotate dehydrogenase family. Type 2 subfamily.</text>
</comment>
<dbReference type="EC" id="1.3.5.2" evidence="1"/>
<dbReference type="EMBL" id="CP000266">
    <property type="protein sequence ID" value="ABF03176.1"/>
    <property type="molecule type" value="Genomic_DNA"/>
</dbReference>
<dbReference type="RefSeq" id="WP_001370288.1">
    <property type="nucleotide sequence ID" value="NC_008258.1"/>
</dbReference>
<dbReference type="SMR" id="Q0T689"/>
<dbReference type="KEGG" id="sfv:SFV_0954"/>
<dbReference type="HOGENOM" id="CLU_013640_2_0_6"/>
<dbReference type="UniPathway" id="UPA00070">
    <property type="reaction ID" value="UER00946"/>
</dbReference>
<dbReference type="Proteomes" id="UP000000659">
    <property type="component" value="Chromosome"/>
</dbReference>
<dbReference type="GO" id="GO:0005737">
    <property type="term" value="C:cytoplasm"/>
    <property type="evidence" value="ECO:0007669"/>
    <property type="project" value="InterPro"/>
</dbReference>
<dbReference type="GO" id="GO:0005886">
    <property type="term" value="C:plasma membrane"/>
    <property type="evidence" value="ECO:0007669"/>
    <property type="project" value="UniProtKB-SubCell"/>
</dbReference>
<dbReference type="GO" id="GO:0106430">
    <property type="term" value="F:dihydroorotate dehydrogenase (quinone) activity"/>
    <property type="evidence" value="ECO:0007669"/>
    <property type="project" value="UniProtKB-EC"/>
</dbReference>
<dbReference type="GO" id="GO:0006207">
    <property type="term" value="P:'de novo' pyrimidine nucleobase biosynthetic process"/>
    <property type="evidence" value="ECO:0007669"/>
    <property type="project" value="InterPro"/>
</dbReference>
<dbReference type="GO" id="GO:0044205">
    <property type="term" value="P:'de novo' UMP biosynthetic process"/>
    <property type="evidence" value="ECO:0007669"/>
    <property type="project" value="UniProtKB-UniRule"/>
</dbReference>
<dbReference type="CDD" id="cd04738">
    <property type="entry name" value="DHOD_2_like"/>
    <property type="match status" value="1"/>
</dbReference>
<dbReference type="FunFam" id="3.20.20.70:FF:000028">
    <property type="entry name" value="Dihydroorotate dehydrogenase (quinone)"/>
    <property type="match status" value="1"/>
</dbReference>
<dbReference type="Gene3D" id="3.20.20.70">
    <property type="entry name" value="Aldolase class I"/>
    <property type="match status" value="1"/>
</dbReference>
<dbReference type="HAMAP" id="MF_00225">
    <property type="entry name" value="DHO_dh_type2"/>
    <property type="match status" value="1"/>
</dbReference>
<dbReference type="InterPro" id="IPR013785">
    <property type="entry name" value="Aldolase_TIM"/>
</dbReference>
<dbReference type="InterPro" id="IPR050074">
    <property type="entry name" value="DHO_dehydrogenase"/>
</dbReference>
<dbReference type="InterPro" id="IPR012135">
    <property type="entry name" value="Dihydroorotate_DH_1_2"/>
</dbReference>
<dbReference type="InterPro" id="IPR005719">
    <property type="entry name" value="Dihydroorotate_DH_2"/>
</dbReference>
<dbReference type="InterPro" id="IPR005720">
    <property type="entry name" value="Dihydroorotate_DH_cat"/>
</dbReference>
<dbReference type="InterPro" id="IPR001295">
    <property type="entry name" value="Dihydroorotate_DH_CS"/>
</dbReference>
<dbReference type="NCBIfam" id="NF003644">
    <property type="entry name" value="PRK05286.1-1"/>
    <property type="match status" value="1"/>
</dbReference>
<dbReference type="NCBIfam" id="NF003645">
    <property type="entry name" value="PRK05286.1-2"/>
    <property type="match status" value="1"/>
</dbReference>
<dbReference type="NCBIfam" id="NF003646">
    <property type="entry name" value="PRK05286.1-4"/>
    <property type="match status" value="1"/>
</dbReference>
<dbReference type="NCBIfam" id="NF003652">
    <property type="entry name" value="PRK05286.2-5"/>
    <property type="match status" value="1"/>
</dbReference>
<dbReference type="NCBIfam" id="TIGR01036">
    <property type="entry name" value="pyrD_sub2"/>
    <property type="match status" value="1"/>
</dbReference>
<dbReference type="PANTHER" id="PTHR48109:SF4">
    <property type="entry name" value="DIHYDROOROTATE DEHYDROGENASE (QUINONE), MITOCHONDRIAL"/>
    <property type="match status" value="1"/>
</dbReference>
<dbReference type="PANTHER" id="PTHR48109">
    <property type="entry name" value="DIHYDROOROTATE DEHYDROGENASE (QUINONE), MITOCHONDRIAL-RELATED"/>
    <property type="match status" value="1"/>
</dbReference>
<dbReference type="Pfam" id="PF01180">
    <property type="entry name" value="DHO_dh"/>
    <property type="match status" value="1"/>
</dbReference>
<dbReference type="PIRSF" id="PIRSF000164">
    <property type="entry name" value="DHO_oxidase"/>
    <property type="match status" value="1"/>
</dbReference>
<dbReference type="SUPFAM" id="SSF51395">
    <property type="entry name" value="FMN-linked oxidoreductases"/>
    <property type="match status" value="1"/>
</dbReference>
<dbReference type="PROSITE" id="PS00911">
    <property type="entry name" value="DHODEHASE_1"/>
    <property type="match status" value="1"/>
</dbReference>
<dbReference type="PROSITE" id="PS00912">
    <property type="entry name" value="DHODEHASE_2"/>
    <property type="match status" value="1"/>
</dbReference>
<evidence type="ECO:0000255" key="1">
    <source>
        <dbReference type="HAMAP-Rule" id="MF_00225"/>
    </source>
</evidence>
<proteinExistence type="inferred from homology"/>
<organism>
    <name type="scientific">Shigella flexneri serotype 5b (strain 8401)</name>
    <dbReference type="NCBI Taxonomy" id="373384"/>
    <lineage>
        <taxon>Bacteria</taxon>
        <taxon>Pseudomonadati</taxon>
        <taxon>Pseudomonadota</taxon>
        <taxon>Gammaproteobacteria</taxon>
        <taxon>Enterobacterales</taxon>
        <taxon>Enterobacteriaceae</taxon>
        <taxon>Shigella</taxon>
    </lineage>
</organism>
<feature type="chain" id="PRO_1000024232" description="Dihydroorotate dehydrogenase (quinone)">
    <location>
        <begin position="1"/>
        <end position="336"/>
    </location>
</feature>
<feature type="active site" description="Nucleophile" evidence="1">
    <location>
        <position position="175"/>
    </location>
</feature>
<feature type="binding site" evidence="1">
    <location>
        <begin position="62"/>
        <end position="66"/>
    </location>
    <ligand>
        <name>FMN</name>
        <dbReference type="ChEBI" id="CHEBI:58210"/>
    </ligand>
</feature>
<feature type="binding site" evidence="1">
    <location>
        <position position="66"/>
    </location>
    <ligand>
        <name>substrate</name>
    </ligand>
</feature>
<feature type="binding site" evidence="1">
    <location>
        <position position="86"/>
    </location>
    <ligand>
        <name>FMN</name>
        <dbReference type="ChEBI" id="CHEBI:58210"/>
    </ligand>
</feature>
<feature type="binding site" evidence="1">
    <location>
        <begin position="111"/>
        <end position="115"/>
    </location>
    <ligand>
        <name>substrate</name>
    </ligand>
</feature>
<feature type="binding site" evidence="1">
    <location>
        <position position="139"/>
    </location>
    <ligand>
        <name>FMN</name>
        <dbReference type="ChEBI" id="CHEBI:58210"/>
    </ligand>
</feature>
<feature type="binding site" evidence="1">
    <location>
        <position position="172"/>
    </location>
    <ligand>
        <name>FMN</name>
        <dbReference type="ChEBI" id="CHEBI:58210"/>
    </ligand>
</feature>
<feature type="binding site" evidence="1">
    <location>
        <position position="172"/>
    </location>
    <ligand>
        <name>substrate</name>
    </ligand>
</feature>
<feature type="binding site" evidence="1">
    <location>
        <position position="177"/>
    </location>
    <ligand>
        <name>substrate</name>
    </ligand>
</feature>
<feature type="binding site" evidence="1">
    <location>
        <position position="217"/>
    </location>
    <ligand>
        <name>FMN</name>
        <dbReference type="ChEBI" id="CHEBI:58210"/>
    </ligand>
</feature>
<feature type="binding site" evidence="1">
    <location>
        <position position="245"/>
    </location>
    <ligand>
        <name>FMN</name>
        <dbReference type="ChEBI" id="CHEBI:58210"/>
    </ligand>
</feature>
<feature type="binding site" evidence="1">
    <location>
        <begin position="246"/>
        <end position="247"/>
    </location>
    <ligand>
        <name>substrate</name>
    </ligand>
</feature>
<feature type="binding site" evidence="1">
    <location>
        <position position="268"/>
    </location>
    <ligand>
        <name>FMN</name>
        <dbReference type="ChEBI" id="CHEBI:58210"/>
    </ligand>
</feature>
<feature type="binding site" evidence="1">
    <location>
        <position position="297"/>
    </location>
    <ligand>
        <name>FMN</name>
        <dbReference type="ChEBI" id="CHEBI:58210"/>
    </ligand>
</feature>
<feature type="binding site" evidence="1">
    <location>
        <begin position="318"/>
        <end position="319"/>
    </location>
    <ligand>
        <name>FMN</name>
        <dbReference type="ChEBI" id="CHEBI:58210"/>
    </ligand>
</feature>
<reference key="1">
    <citation type="journal article" date="2006" name="BMC Genomics">
        <title>Complete genome sequence of Shigella flexneri 5b and comparison with Shigella flexneri 2a.</title>
        <authorList>
            <person name="Nie H."/>
            <person name="Yang F."/>
            <person name="Zhang X."/>
            <person name="Yang J."/>
            <person name="Chen L."/>
            <person name="Wang J."/>
            <person name="Xiong Z."/>
            <person name="Peng J."/>
            <person name="Sun L."/>
            <person name="Dong J."/>
            <person name="Xue Y."/>
            <person name="Xu X."/>
            <person name="Chen S."/>
            <person name="Yao Z."/>
            <person name="Shen Y."/>
            <person name="Jin Q."/>
        </authorList>
    </citation>
    <scope>NUCLEOTIDE SEQUENCE [LARGE SCALE GENOMIC DNA]</scope>
    <source>
        <strain>8401</strain>
    </source>
</reference>
<gene>
    <name evidence="1" type="primary">pyrD</name>
    <name type="ordered locus">SFV_0954</name>
</gene>
<keyword id="KW-1003">Cell membrane</keyword>
<keyword id="KW-0285">Flavoprotein</keyword>
<keyword id="KW-0288">FMN</keyword>
<keyword id="KW-0472">Membrane</keyword>
<keyword id="KW-0560">Oxidoreductase</keyword>
<keyword id="KW-0665">Pyrimidine biosynthesis</keyword>